<keyword id="KW-0067">ATP-binding</keyword>
<keyword id="KW-0963">Cytoplasm</keyword>
<keyword id="KW-0418">Kinase</keyword>
<keyword id="KW-0547">Nucleotide-binding</keyword>
<keyword id="KW-0808">Transferase</keyword>
<gene>
    <name evidence="1" type="primary">cmk</name>
    <name type="ordered locus">MHJ_0065</name>
</gene>
<dbReference type="EC" id="2.7.4.25" evidence="1"/>
<dbReference type="EMBL" id="AE017243">
    <property type="protein sequence ID" value="AAZ44159.1"/>
    <property type="molecule type" value="Genomic_DNA"/>
</dbReference>
<dbReference type="RefSeq" id="WP_011283885.1">
    <property type="nucleotide sequence ID" value="NC_007295.1"/>
</dbReference>
<dbReference type="SMR" id="Q4AAR2"/>
<dbReference type="GeneID" id="41334355"/>
<dbReference type="KEGG" id="mhj:MHJ_0065"/>
<dbReference type="eggNOG" id="COG0283">
    <property type="taxonomic scope" value="Bacteria"/>
</dbReference>
<dbReference type="HOGENOM" id="CLU_079959_0_2_14"/>
<dbReference type="OrthoDB" id="9807434at2"/>
<dbReference type="Proteomes" id="UP000000548">
    <property type="component" value="Chromosome"/>
</dbReference>
<dbReference type="GO" id="GO:0005737">
    <property type="term" value="C:cytoplasm"/>
    <property type="evidence" value="ECO:0007669"/>
    <property type="project" value="UniProtKB-SubCell"/>
</dbReference>
<dbReference type="GO" id="GO:0005524">
    <property type="term" value="F:ATP binding"/>
    <property type="evidence" value="ECO:0007669"/>
    <property type="project" value="UniProtKB-UniRule"/>
</dbReference>
<dbReference type="GO" id="GO:0036430">
    <property type="term" value="F:CMP kinase activity"/>
    <property type="evidence" value="ECO:0007669"/>
    <property type="project" value="RHEA"/>
</dbReference>
<dbReference type="GO" id="GO:0036431">
    <property type="term" value="F:dCMP kinase activity"/>
    <property type="evidence" value="ECO:0007669"/>
    <property type="project" value="RHEA"/>
</dbReference>
<dbReference type="GO" id="GO:0006220">
    <property type="term" value="P:pyrimidine nucleotide metabolic process"/>
    <property type="evidence" value="ECO:0007669"/>
    <property type="project" value="UniProtKB-UniRule"/>
</dbReference>
<dbReference type="CDD" id="cd02020">
    <property type="entry name" value="CMPK"/>
    <property type="match status" value="1"/>
</dbReference>
<dbReference type="Gene3D" id="3.40.50.300">
    <property type="entry name" value="P-loop containing nucleotide triphosphate hydrolases"/>
    <property type="match status" value="1"/>
</dbReference>
<dbReference type="HAMAP" id="MF_00238">
    <property type="entry name" value="Cytidyl_kinase_type1"/>
    <property type="match status" value="1"/>
</dbReference>
<dbReference type="InterPro" id="IPR003136">
    <property type="entry name" value="Cytidylate_kin"/>
</dbReference>
<dbReference type="InterPro" id="IPR011994">
    <property type="entry name" value="Cytidylate_kinase_dom"/>
</dbReference>
<dbReference type="InterPro" id="IPR027417">
    <property type="entry name" value="P-loop_NTPase"/>
</dbReference>
<dbReference type="NCBIfam" id="TIGR00017">
    <property type="entry name" value="cmk"/>
    <property type="match status" value="1"/>
</dbReference>
<dbReference type="Pfam" id="PF02224">
    <property type="entry name" value="Cytidylate_kin"/>
    <property type="match status" value="1"/>
</dbReference>
<dbReference type="SUPFAM" id="SSF52540">
    <property type="entry name" value="P-loop containing nucleoside triphosphate hydrolases"/>
    <property type="match status" value="1"/>
</dbReference>
<comment type="catalytic activity">
    <reaction evidence="1">
        <text>CMP + ATP = CDP + ADP</text>
        <dbReference type="Rhea" id="RHEA:11600"/>
        <dbReference type="ChEBI" id="CHEBI:30616"/>
        <dbReference type="ChEBI" id="CHEBI:58069"/>
        <dbReference type="ChEBI" id="CHEBI:60377"/>
        <dbReference type="ChEBI" id="CHEBI:456216"/>
        <dbReference type="EC" id="2.7.4.25"/>
    </reaction>
</comment>
<comment type="catalytic activity">
    <reaction evidence="1">
        <text>dCMP + ATP = dCDP + ADP</text>
        <dbReference type="Rhea" id="RHEA:25094"/>
        <dbReference type="ChEBI" id="CHEBI:30616"/>
        <dbReference type="ChEBI" id="CHEBI:57566"/>
        <dbReference type="ChEBI" id="CHEBI:58593"/>
        <dbReference type="ChEBI" id="CHEBI:456216"/>
        <dbReference type="EC" id="2.7.4.25"/>
    </reaction>
</comment>
<comment type="subcellular location">
    <subcellularLocation>
        <location evidence="1">Cytoplasm</location>
    </subcellularLocation>
</comment>
<comment type="similarity">
    <text evidence="1">Belongs to the cytidylate kinase family. Type 1 subfamily.</text>
</comment>
<organism>
    <name type="scientific">Mesomycoplasma hyopneumoniae (strain J / ATCC 25934 / NCTC 10110)</name>
    <name type="common">Mycoplasma hyopneumoniae</name>
    <dbReference type="NCBI Taxonomy" id="262719"/>
    <lineage>
        <taxon>Bacteria</taxon>
        <taxon>Bacillati</taxon>
        <taxon>Mycoplasmatota</taxon>
        <taxon>Mycoplasmoidales</taxon>
        <taxon>Metamycoplasmataceae</taxon>
        <taxon>Mesomycoplasma</taxon>
    </lineage>
</organism>
<evidence type="ECO:0000255" key="1">
    <source>
        <dbReference type="HAMAP-Rule" id="MF_00238"/>
    </source>
</evidence>
<feature type="chain" id="PRO_1000048237" description="Cytidylate kinase">
    <location>
        <begin position="1"/>
        <end position="229"/>
    </location>
</feature>
<feature type="binding site" evidence="1">
    <location>
        <begin position="12"/>
        <end position="20"/>
    </location>
    <ligand>
        <name>ATP</name>
        <dbReference type="ChEBI" id="CHEBI:30616"/>
    </ligand>
</feature>
<proteinExistence type="inferred from homology"/>
<protein>
    <recommendedName>
        <fullName evidence="1">Cytidylate kinase</fullName>
        <shortName evidence="1">CK</shortName>
        <ecNumber evidence="1">2.7.4.25</ecNumber>
    </recommendedName>
    <alternativeName>
        <fullName evidence="1">Cytidine monophosphate kinase</fullName>
        <shortName evidence="1">CMP kinase</shortName>
    </alternativeName>
</protein>
<name>KCY_MESHJ</name>
<reference key="1">
    <citation type="journal article" date="2005" name="J. Bacteriol.">
        <title>Swine and poultry pathogens: the complete genome sequences of two strains of Mycoplasma hyopneumoniae and a strain of Mycoplasma synoviae.</title>
        <authorList>
            <person name="Vasconcelos A.T.R."/>
            <person name="Ferreira H.B."/>
            <person name="Bizarro C.V."/>
            <person name="Bonatto S.L."/>
            <person name="Carvalho M.O."/>
            <person name="Pinto P.M."/>
            <person name="Almeida D.F."/>
            <person name="Almeida L.G.P."/>
            <person name="Almeida R."/>
            <person name="Alves-Junior L."/>
            <person name="Assuncao E.N."/>
            <person name="Azevedo V.A.C."/>
            <person name="Bogo M.R."/>
            <person name="Brigido M.M."/>
            <person name="Brocchi M."/>
            <person name="Burity H.A."/>
            <person name="Camargo A.A."/>
            <person name="Camargo S.S."/>
            <person name="Carepo M.S."/>
            <person name="Carraro D.M."/>
            <person name="de Mattos Cascardo J.C."/>
            <person name="Castro L.A."/>
            <person name="Cavalcanti G."/>
            <person name="Chemale G."/>
            <person name="Collevatti R.G."/>
            <person name="Cunha C.W."/>
            <person name="Dallagiovanna B."/>
            <person name="Dambros B.P."/>
            <person name="Dellagostin O.A."/>
            <person name="Falcao C."/>
            <person name="Fantinatti-Garboggini F."/>
            <person name="Felipe M.S.S."/>
            <person name="Fiorentin L."/>
            <person name="Franco G.R."/>
            <person name="Freitas N.S.A."/>
            <person name="Frias D."/>
            <person name="Grangeiro T.B."/>
            <person name="Grisard E.C."/>
            <person name="Guimaraes C.T."/>
            <person name="Hungria M."/>
            <person name="Jardim S.N."/>
            <person name="Krieger M.A."/>
            <person name="Laurino J.P."/>
            <person name="Lima L.F.A."/>
            <person name="Lopes M.I."/>
            <person name="Loreto E.L.S."/>
            <person name="Madeira H.M.F."/>
            <person name="Manfio G.P."/>
            <person name="Maranhao A.Q."/>
            <person name="Martinkovics C.T."/>
            <person name="Medeiros S.R.B."/>
            <person name="Moreira M.A.M."/>
            <person name="Neiva M."/>
            <person name="Ramalho-Neto C.E."/>
            <person name="Nicolas M.F."/>
            <person name="Oliveira S.C."/>
            <person name="Paixao R.F.C."/>
            <person name="Pedrosa F.O."/>
            <person name="Pena S.D.J."/>
            <person name="Pereira M."/>
            <person name="Pereira-Ferrari L."/>
            <person name="Piffer I."/>
            <person name="Pinto L.S."/>
            <person name="Potrich D.P."/>
            <person name="Salim A.C.M."/>
            <person name="Santos F.R."/>
            <person name="Schmitt R."/>
            <person name="Schneider M.P.C."/>
            <person name="Schrank A."/>
            <person name="Schrank I.S."/>
            <person name="Schuck A.F."/>
            <person name="Seuanez H.N."/>
            <person name="Silva D.W."/>
            <person name="Silva R."/>
            <person name="Silva S.C."/>
            <person name="Soares C.M.A."/>
            <person name="Souza K.R.L."/>
            <person name="Souza R.C."/>
            <person name="Staats C.C."/>
            <person name="Steffens M.B.R."/>
            <person name="Teixeira S.M.R."/>
            <person name="Urmenyi T.P."/>
            <person name="Vainstein M.H."/>
            <person name="Zuccherato L.W."/>
            <person name="Simpson A.J.G."/>
            <person name="Zaha A."/>
        </authorList>
    </citation>
    <scope>NUCLEOTIDE SEQUENCE [LARGE SCALE GENOMIC DNA]</scope>
    <source>
        <strain>J / ATCC 25934 / NCTC 10110</strain>
    </source>
</reference>
<accession>Q4AAR2</accession>
<sequence>MPFKKINIAIDGPSGVGKSTIAKQIANKFNYLFINTGSLYRAIAFFCQKNQISITSERKMIKHLPPNFLSLDFEGNVWLQNQNVSNLLRNDLISKNAAIIAQYPQIRKIVTEILQNFQKNHKGIIMEGRDTTYNVMPDADLKIFLWADAETRAKRRLKQNTFLNLETDFQEILKAIEHRDYLDMTRKTNPLKKTVDSIFLDTTNFTRDQIVSQISKLVFRKIGQFSLEI</sequence>